<comment type="similarity">
    <text evidence="1">Belongs to the bacterial ribosomal protein bL36 family.</text>
</comment>
<comment type="sequence caution" evidence="2">
    <conflict type="erroneous initiation">
        <sequence resource="EMBL-CDS" id="CAG35877"/>
    </conflict>
</comment>
<gene>
    <name evidence="1" type="primary">rpmJ</name>
    <name type="ordered locus">DP1148</name>
</gene>
<sequence length="37" mass="4276">MKVRASVKKICSDCKVYKRNGVVRVSCKVKKHKQRQG</sequence>
<dbReference type="EMBL" id="CR522870">
    <property type="protein sequence ID" value="CAG35877.1"/>
    <property type="status" value="ALT_INIT"/>
    <property type="molecule type" value="Genomic_DNA"/>
</dbReference>
<dbReference type="SMR" id="Q6AP47"/>
<dbReference type="STRING" id="177439.DP1148"/>
<dbReference type="KEGG" id="dps:DP1148"/>
<dbReference type="eggNOG" id="COG0257">
    <property type="taxonomic scope" value="Bacteria"/>
</dbReference>
<dbReference type="HOGENOM" id="CLU_135723_6_2_7"/>
<dbReference type="OrthoDB" id="9802520at2"/>
<dbReference type="Proteomes" id="UP000000602">
    <property type="component" value="Chromosome"/>
</dbReference>
<dbReference type="GO" id="GO:0005737">
    <property type="term" value="C:cytoplasm"/>
    <property type="evidence" value="ECO:0007669"/>
    <property type="project" value="UniProtKB-ARBA"/>
</dbReference>
<dbReference type="GO" id="GO:1990904">
    <property type="term" value="C:ribonucleoprotein complex"/>
    <property type="evidence" value="ECO:0007669"/>
    <property type="project" value="UniProtKB-KW"/>
</dbReference>
<dbReference type="GO" id="GO:0005840">
    <property type="term" value="C:ribosome"/>
    <property type="evidence" value="ECO:0007669"/>
    <property type="project" value="UniProtKB-KW"/>
</dbReference>
<dbReference type="GO" id="GO:0003735">
    <property type="term" value="F:structural constituent of ribosome"/>
    <property type="evidence" value="ECO:0007669"/>
    <property type="project" value="InterPro"/>
</dbReference>
<dbReference type="GO" id="GO:0006412">
    <property type="term" value="P:translation"/>
    <property type="evidence" value="ECO:0007669"/>
    <property type="project" value="UniProtKB-UniRule"/>
</dbReference>
<dbReference type="HAMAP" id="MF_00251">
    <property type="entry name" value="Ribosomal_bL36"/>
    <property type="match status" value="1"/>
</dbReference>
<dbReference type="InterPro" id="IPR000473">
    <property type="entry name" value="Ribosomal_bL36"/>
</dbReference>
<dbReference type="InterPro" id="IPR035977">
    <property type="entry name" value="Ribosomal_bL36_sp"/>
</dbReference>
<dbReference type="NCBIfam" id="TIGR01022">
    <property type="entry name" value="rpmJ_bact"/>
    <property type="match status" value="1"/>
</dbReference>
<dbReference type="PANTHER" id="PTHR42888">
    <property type="entry name" value="50S RIBOSOMAL PROTEIN L36, CHLOROPLASTIC"/>
    <property type="match status" value="1"/>
</dbReference>
<dbReference type="PANTHER" id="PTHR42888:SF1">
    <property type="entry name" value="LARGE RIBOSOMAL SUBUNIT PROTEIN BL36C"/>
    <property type="match status" value="1"/>
</dbReference>
<dbReference type="Pfam" id="PF00444">
    <property type="entry name" value="Ribosomal_L36"/>
    <property type="match status" value="1"/>
</dbReference>
<dbReference type="SUPFAM" id="SSF57840">
    <property type="entry name" value="Ribosomal protein L36"/>
    <property type="match status" value="1"/>
</dbReference>
<organism>
    <name type="scientific">Desulfotalea psychrophila (strain LSv54 / DSM 12343)</name>
    <dbReference type="NCBI Taxonomy" id="177439"/>
    <lineage>
        <taxon>Bacteria</taxon>
        <taxon>Pseudomonadati</taxon>
        <taxon>Thermodesulfobacteriota</taxon>
        <taxon>Desulfobulbia</taxon>
        <taxon>Desulfobulbales</taxon>
        <taxon>Desulfocapsaceae</taxon>
        <taxon>Desulfotalea</taxon>
    </lineage>
</organism>
<name>RL36_DESPS</name>
<reference key="1">
    <citation type="journal article" date="2004" name="Environ. Microbiol.">
        <title>The genome of Desulfotalea psychrophila, a sulfate-reducing bacterium from permanently cold Arctic sediments.</title>
        <authorList>
            <person name="Rabus R."/>
            <person name="Ruepp A."/>
            <person name="Frickey T."/>
            <person name="Rattei T."/>
            <person name="Fartmann B."/>
            <person name="Stark M."/>
            <person name="Bauer M."/>
            <person name="Zibat A."/>
            <person name="Lombardot T."/>
            <person name="Becker I."/>
            <person name="Amann J."/>
            <person name="Gellner K."/>
            <person name="Teeling H."/>
            <person name="Leuschner W.D."/>
            <person name="Gloeckner F.-O."/>
            <person name="Lupas A.N."/>
            <person name="Amann R."/>
            <person name="Klenk H.-P."/>
        </authorList>
    </citation>
    <scope>NUCLEOTIDE SEQUENCE [LARGE SCALE GENOMIC DNA]</scope>
    <source>
        <strain>DSM 12343 / LSv54</strain>
    </source>
</reference>
<keyword id="KW-1185">Reference proteome</keyword>
<keyword id="KW-0687">Ribonucleoprotein</keyword>
<keyword id="KW-0689">Ribosomal protein</keyword>
<proteinExistence type="inferred from homology"/>
<feature type="chain" id="PRO_0000344662" description="Large ribosomal subunit protein bL36">
    <location>
        <begin position="1"/>
        <end position="37"/>
    </location>
</feature>
<protein>
    <recommendedName>
        <fullName evidence="1">Large ribosomal subunit protein bL36</fullName>
    </recommendedName>
    <alternativeName>
        <fullName evidence="2">50S ribosomal protein L36</fullName>
    </alternativeName>
</protein>
<accession>Q6AP47</accession>
<evidence type="ECO:0000255" key="1">
    <source>
        <dbReference type="HAMAP-Rule" id="MF_00251"/>
    </source>
</evidence>
<evidence type="ECO:0000305" key="2"/>